<reference key="1">
    <citation type="journal article" date="1986" name="J. Virol.">
        <title>Genome organization and nucleotide sequence of human papillomavirus type 33, which is associated with cervical cancer.</title>
        <authorList>
            <person name="Cole S.T."/>
            <person name="Streeck R.E."/>
        </authorList>
    </citation>
    <scope>NUCLEOTIDE SEQUENCE [GENOMIC DNA]</scope>
</reference>
<keyword id="KW-0002">3D-structure</keyword>
<keyword id="KW-0167">Capsid protein</keyword>
<keyword id="KW-1015">Disulfide bond</keyword>
<keyword id="KW-1048">Host nucleus</keyword>
<keyword id="KW-0945">Host-virus interaction</keyword>
<keyword id="KW-0426">Late protein</keyword>
<keyword id="KW-1145">T=7 icosahedral capsid protein</keyword>
<keyword id="KW-1161">Viral attachment to host cell</keyword>
<keyword id="KW-1162">Viral penetration into host cytoplasm</keyword>
<keyword id="KW-0946">Virion</keyword>
<keyword id="KW-1164">Virus endocytosis by host</keyword>
<keyword id="KW-1160">Virus entry into host cell</keyword>
<accession>P06416</accession>
<proteinExistence type="evidence at protein level"/>
<organismHost>
    <name type="scientific">Homo sapiens</name>
    <name type="common">Human</name>
    <dbReference type="NCBI Taxonomy" id="9606"/>
</organismHost>
<evidence type="ECO:0000255" key="1">
    <source>
        <dbReference type="HAMAP-Rule" id="MF_04002"/>
    </source>
</evidence>
<evidence type="ECO:0000256" key="2">
    <source>
        <dbReference type="SAM" id="MobiDB-lite"/>
    </source>
</evidence>
<evidence type="ECO:0007829" key="3">
    <source>
        <dbReference type="PDB" id="6IGE"/>
    </source>
</evidence>
<protein>
    <recommendedName>
        <fullName evidence="1">Major capsid protein L1</fullName>
    </recommendedName>
</protein>
<name>VL1_HPV33</name>
<organism>
    <name type="scientific">Human papillomavirus 33</name>
    <dbReference type="NCBI Taxonomy" id="10586"/>
    <lineage>
        <taxon>Viruses</taxon>
        <taxon>Monodnaviria</taxon>
        <taxon>Shotokuvirae</taxon>
        <taxon>Cossaviricota</taxon>
        <taxon>Papovaviricetes</taxon>
        <taxon>Zurhausenvirales</taxon>
        <taxon>Papillomaviridae</taxon>
        <taxon>Firstpapillomavirinae</taxon>
        <taxon>Alphapapillomavirus</taxon>
        <taxon>Alphapapillomavirus 9</taxon>
    </lineage>
</organism>
<gene>
    <name evidence="1" type="primary">L1</name>
</gene>
<sequence length="499" mass="55903">MSVWRPSEATVYLPPVPVSKVVSTDEYVSRTSIYYYAGSSRLLAVGHPYFSIKNPTNAKKLLVPKVSGLQYRVFRVRLPDPNKFGFPDTSFYNPDTQRLVWACVGLEIGRGQPLGVGISGHPLLNKFDDTETGNKYPGQPGADNRECLSMDYKQTQLCLLGCKPPTGEHWGKGVACTNAAPANDCPPLELINTIIEDGDMVDTGFGCMDFKTLQANKSDVPIDICGSTCKYPDYLKMTSEPYGDSLFFFLRREQMFVRHFFNRAGTLGEAVPDDLYIKGSGTTASIQSSAFFPTPSGSMVTSESQLFNKPYWLQRAQGHNNGICWGNQVFVTVVDTTRSTNMTLCTQVTSDSTYKNENFKEYIRHVEEYDLQFVFQLCKVTLTAEVMTYIHAMNPDILEDWQFGLTPPPSASLQDTYRFVTSQAITCQKTVPPKEKEDPLGKYTFWEVDLKEKFSADLDQFPLGRKFLLQAGLKAKPKLKRAAPTSTRTSSAKRKKVKK</sequence>
<dbReference type="EMBL" id="M12732">
    <property type="protein sequence ID" value="AAA46964.1"/>
    <property type="molecule type" value="Genomic_DNA"/>
</dbReference>
<dbReference type="PIR" id="A03641">
    <property type="entry name" value="P1WL33"/>
</dbReference>
<dbReference type="PDB" id="6IGE">
    <property type="method" value="X-ray"/>
    <property type="resolution" value="2.90 A"/>
    <property type="chains" value="A/B/C/D/E/F/G/H/I/J=1-499"/>
</dbReference>
<dbReference type="PDBsum" id="6IGE"/>
<dbReference type="SMR" id="P06416"/>
<dbReference type="Proteomes" id="UP000009118">
    <property type="component" value="Genome"/>
</dbReference>
<dbReference type="GO" id="GO:0042025">
    <property type="term" value="C:host cell nucleus"/>
    <property type="evidence" value="ECO:0007669"/>
    <property type="project" value="UniProtKB-SubCell"/>
</dbReference>
<dbReference type="GO" id="GO:0039620">
    <property type="term" value="C:T=7 icosahedral viral capsid"/>
    <property type="evidence" value="ECO:0007669"/>
    <property type="project" value="UniProtKB-UniRule"/>
</dbReference>
<dbReference type="GO" id="GO:0005198">
    <property type="term" value="F:structural molecule activity"/>
    <property type="evidence" value="ECO:0007669"/>
    <property type="project" value="UniProtKB-UniRule"/>
</dbReference>
<dbReference type="GO" id="GO:0075509">
    <property type="term" value="P:endocytosis involved in viral entry into host cell"/>
    <property type="evidence" value="ECO:0007669"/>
    <property type="project" value="UniProtKB-KW"/>
</dbReference>
<dbReference type="GO" id="GO:0019062">
    <property type="term" value="P:virion attachment to host cell"/>
    <property type="evidence" value="ECO:0007669"/>
    <property type="project" value="UniProtKB-UniRule"/>
</dbReference>
<dbReference type="Gene3D" id="2.60.175.20">
    <property type="entry name" value="Major capsid L1 (late) superfamily, Papillomavirus"/>
    <property type="match status" value="2"/>
</dbReference>
<dbReference type="HAMAP" id="MF_04002">
    <property type="entry name" value="PPV_L1"/>
    <property type="match status" value="1"/>
</dbReference>
<dbReference type="InterPro" id="IPR002210">
    <property type="entry name" value="Capsid_L1_Papillomavir"/>
</dbReference>
<dbReference type="InterPro" id="IPR036973">
    <property type="entry name" value="Capsid_L1_sf_Papillomavir"/>
</dbReference>
<dbReference type="InterPro" id="IPR011222">
    <property type="entry name" value="dsDNA_vir_gr_I_capsid"/>
</dbReference>
<dbReference type="Pfam" id="PF00500">
    <property type="entry name" value="Late_protein_L1"/>
    <property type="match status" value="1"/>
</dbReference>
<dbReference type="PRINTS" id="PR00865">
    <property type="entry name" value="HPVCAPSIDL1"/>
</dbReference>
<dbReference type="SUPFAM" id="SSF88648">
    <property type="entry name" value="Group I dsDNA viruses"/>
    <property type="match status" value="1"/>
</dbReference>
<feature type="chain" id="PRO_0000133517" description="Major capsid protein L1">
    <location>
        <begin position="1"/>
        <end position="499"/>
    </location>
</feature>
<feature type="region of interest" description="Disordered" evidence="2">
    <location>
        <begin position="476"/>
        <end position="499"/>
    </location>
</feature>
<feature type="disulfide bond" description="Interchain (with C-427)" evidence="1">
    <location>
        <position position="176"/>
    </location>
</feature>
<feature type="disulfide bond" description="Interchain (with C-176)" evidence="1">
    <location>
        <position position="427"/>
    </location>
</feature>
<feature type="helix" evidence="3">
    <location>
        <begin position="24"/>
        <end position="26"/>
    </location>
</feature>
<feature type="strand" evidence="3">
    <location>
        <begin position="29"/>
        <end position="38"/>
    </location>
</feature>
<feature type="strand" evidence="3">
    <location>
        <begin position="42"/>
        <end position="49"/>
    </location>
</feature>
<feature type="strand" evidence="3">
    <location>
        <begin position="60"/>
        <end position="63"/>
    </location>
</feature>
<feature type="strand" evidence="3">
    <location>
        <begin position="72"/>
        <end position="77"/>
    </location>
</feature>
<feature type="helix" evidence="3">
    <location>
        <begin position="81"/>
        <end position="83"/>
    </location>
</feature>
<feature type="turn" evidence="3">
    <location>
        <begin position="94"/>
        <end position="96"/>
    </location>
</feature>
<feature type="strand" evidence="3">
    <location>
        <begin position="97"/>
        <end position="110"/>
    </location>
</feature>
<feature type="strand" evidence="3">
    <location>
        <begin position="119"/>
        <end position="124"/>
    </location>
</feature>
<feature type="strand" evidence="3">
    <location>
        <begin position="134"/>
        <end position="136"/>
    </location>
</feature>
<feature type="strand" evidence="3">
    <location>
        <begin position="146"/>
        <end position="150"/>
    </location>
</feature>
<feature type="strand" evidence="3">
    <location>
        <begin position="154"/>
        <end position="163"/>
    </location>
</feature>
<feature type="strand" evidence="3">
    <location>
        <begin position="166"/>
        <end position="172"/>
    </location>
</feature>
<feature type="strand" evidence="3">
    <location>
        <begin position="188"/>
        <end position="194"/>
    </location>
</feature>
<feature type="strand" evidence="3">
    <location>
        <begin position="207"/>
        <end position="209"/>
    </location>
</feature>
<feature type="helix" evidence="3">
    <location>
        <begin position="210"/>
        <end position="213"/>
    </location>
</feature>
<feature type="helix" evidence="3">
    <location>
        <begin position="222"/>
        <end position="225"/>
    </location>
</feature>
<feature type="strand" evidence="3">
    <location>
        <begin position="227"/>
        <end position="232"/>
    </location>
</feature>
<feature type="helix" evidence="3">
    <location>
        <begin position="234"/>
        <end position="239"/>
    </location>
</feature>
<feature type="strand" evidence="3">
    <location>
        <begin position="240"/>
        <end position="242"/>
    </location>
</feature>
<feature type="strand" evidence="3">
    <location>
        <begin position="247"/>
        <end position="262"/>
    </location>
</feature>
<feature type="strand" evidence="3">
    <location>
        <begin position="265"/>
        <end position="269"/>
    </location>
</feature>
<feature type="helix" evidence="3">
    <location>
        <begin position="273"/>
        <end position="275"/>
    </location>
</feature>
<feature type="helix" evidence="3">
    <location>
        <begin position="281"/>
        <end position="283"/>
    </location>
</feature>
<feature type="strand" evidence="3">
    <location>
        <begin position="291"/>
        <end position="296"/>
    </location>
</feature>
<feature type="strand" evidence="3">
    <location>
        <begin position="300"/>
        <end position="302"/>
    </location>
</feature>
<feature type="strand" evidence="3">
    <location>
        <begin position="307"/>
        <end position="312"/>
    </location>
</feature>
<feature type="strand" evidence="3">
    <location>
        <begin position="317"/>
        <end position="319"/>
    </location>
</feature>
<feature type="strand" evidence="3">
    <location>
        <begin position="322"/>
        <end position="324"/>
    </location>
</feature>
<feature type="helix" evidence="3">
    <location>
        <begin position="325"/>
        <end position="327"/>
    </location>
</feature>
<feature type="strand" evidence="3">
    <location>
        <begin position="328"/>
        <end position="335"/>
    </location>
</feature>
<feature type="strand" evidence="3">
    <location>
        <begin position="342"/>
        <end position="349"/>
    </location>
</feature>
<feature type="helix" evidence="3">
    <location>
        <begin position="356"/>
        <end position="358"/>
    </location>
</feature>
<feature type="strand" evidence="3">
    <location>
        <begin position="359"/>
        <end position="381"/>
    </location>
</feature>
<feature type="helix" evidence="3">
    <location>
        <begin position="384"/>
        <end position="393"/>
    </location>
</feature>
<feature type="helix" evidence="3">
    <location>
        <begin position="396"/>
        <end position="401"/>
    </location>
</feature>
<feature type="helix" evidence="3">
    <location>
        <begin position="439"/>
        <end position="442"/>
    </location>
</feature>
<feature type="strand" evidence="3">
    <location>
        <begin position="446"/>
        <end position="449"/>
    </location>
</feature>
<feature type="strand" evidence="3">
    <location>
        <begin position="454"/>
        <end position="456"/>
    </location>
</feature>
<feature type="helix" evidence="3">
    <location>
        <begin position="458"/>
        <end position="460"/>
    </location>
</feature>
<feature type="helix" evidence="3">
    <location>
        <begin position="462"/>
        <end position="470"/>
    </location>
</feature>
<comment type="function">
    <text evidence="1">Forms an icosahedral capsid with a T=7 symmetry and a 50 nm diameter. The capsid is composed of 72 pentamers linked to each other by disulfide bonds and associated with L2 proteins. Binds to heparan sulfate proteoglycans on cell surface of basal layer keratinocytes to provide initial virion attachment. This binding mediates a conformational change in the virus capsid that facilitates efficient infection. The virion enters the host cell via endocytosis. During virus trafficking, L1 protein dissociates from the viral DNA and the genomic DNA is released to the host nucleus. The virion assembly takes place within the cell nucleus. Encapsulates the genomic DNA together with protein L2.</text>
</comment>
<comment type="subunit">
    <text evidence="1">Self-assembles into homopentamers. The capsid has an icosahedral symmetry and consists of 72 capsomers, with each capsomer being a pentamer of L1. Interacts with the minor capsid protein L2; this interaction is necessary for viral genome encapsidation. Interacts with protein E2; this interaction enhances E2-dependent replication and transcription activation.</text>
</comment>
<comment type="subcellular location">
    <subcellularLocation>
        <location evidence="1">Virion</location>
    </subcellularLocation>
    <subcellularLocation>
        <location evidence="1">Host nucleus</location>
    </subcellularLocation>
</comment>
<comment type="similarity">
    <text evidence="1">Belongs to the papillomaviridae L1 protein family.</text>
</comment>